<dbReference type="EC" id="1.5.1.3"/>
<dbReference type="EMBL" id="AE014075">
    <property type="protein sequence ID" value="AAN78554.1"/>
    <property type="status" value="ALT_INIT"/>
    <property type="molecule type" value="Genomic_DNA"/>
</dbReference>
<dbReference type="RefSeq" id="WP_000624375.1">
    <property type="nucleotide sequence ID" value="NZ_CP051263.1"/>
</dbReference>
<dbReference type="BMRB" id="P0ABQ5"/>
<dbReference type="SMR" id="P0ABQ5"/>
<dbReference type="STRING" id="199310.c0058"/>
<dbReference type="GeneID" id="93777387"/>
<dbReference type="KEGG" id="ecc:c0058"/>
<dbReference type="eggNOG" id="COG0262">
    <property type="taxonomic scope" value="Bacteria"/>
</dbReference>
<dbReference type="HOGENOM" id="CLU_043966_5_1_6"/>
<dbReference type="UniPathway" id="UPA00077">
    <property type="reaction ID" value="UER00158"/>
</dbReference>
<dbReference type="Proteomes" id="UP000001410">
    <property type="component" value="Chromosome"/>
</dbReference>
<dbReference type="GO" id="GO:0005829">
    <property type="term" value="C:cytosol"/>
    <property type="evidence" value="ECO:0007669"/>
    <property type="project" value="TreeGrafter"/>
</dbReference>
<dbReference type="GO" id="GO:0004146">
    <property type="term" value="F:dihydrofolate reductase activity"/>
    <property type="evidence" value="ECO:0007669"/>
    <property type="project" value="UniProtKB-EC"/>
</dbReference>
<dbReference type="GO" id="GO:0050661">
    <property type="term" value="F:NADP binding"/>
    <property type="evidence" value="ECO:0007669"/>
    <property type="project" value="InterPro"/>
</dbReference>
<dbReference type="GO" id="GO:0046452">
    <property type="term" value="P:dihydrofolate metabolic process"/>
    <property type="evidence" value="ECO:0007669"/>
    <property type="project" value="TreeGrafter"/>
</dbReference>
<dbReference type="GO" id="GO:0046655">
    <property type="term" value="P:folic acid metabolic process"/>
    <property type="evidence" value="ECO:0007669"/>
    <property type="project" value="TreeGrafter"/>
</dbReference>
<dbReference type="GO" id="GO:0006730">
    <property type="term" value="P:one-carbon metabolic process"/>
    <property type="evidence" value="ECO:0007669"/>
    <property type="project" value="UniProtKB-KW"/>
</dbReference>
<dbReference type="GO" id="GO:0046654">
    <property type="term" value="P:tetrahydrofolate biosynthetic process"/>
    <property type="evidence" value="ECO:0007669"/>
    <property type="project" value="UniProtKB-UniPathway"/>
</dbReference>
<dbReference type="CDD" id="cd00209">
    <property type="entry name" value="DHFR"/>
    <property type="match status" value="1"/>
</dbReference>
<dbReference type="FunFam" id="3.40.430.10:FF:000001">
    <property type="entry name" value="Dihydrofolate reductase"/>
    <property type="match status" value="1"/>
</dbReference>
<dbReference type="Gene3D" id="3.40.430.10">
    <property type="entry name" value="Dihydrofolate Reductase, subunit A"/>
    <property type="match status" value="1"/>
</dbReference>
<dbReference type="InterPro" id="IPR012259">
    <property type="entry name" value="DHFR"/>
</dbReference>
<dbReference type="InterPro" id="IPR024072">
    <property type="entry name" value="DHFR-like_dom_sf"/>
</dbReference>
<dbReference type="InterPro" id="IPR017925">
    <property type="entry name" value="DHFR_CS"/>
</dbReference>
<dbReference type="InterPro" id="IPR001796">
    <property type="entry name" value="DHFR_dom"/>
</dbReference>
<dbReference type="NCBIfam" id="NF008037">
    <property type="entry name" value="PRK10769.1"/>
    <property type="match status" value="1"/>
</dbReference>
<dbReference type="PANTHER" id="PTHR48069">
    <property type="entry name" value="DIHYDROFOLATE REDUCTASE"/>
    <property type="match status" value="1"/>
</dbReference>
<dbReference type="PANTHER" id="PTHR48069:SF3">
    <property type="entry name" value="DIHYDROFOLATE REDUCTASE"/>
    <property type="match status" value="1"/>
</dbReference>
<dbReference type="Pfam" id="PF00186">
    <property type="entry name" value="DHFR_1"/>
    <property type="match status" value="1"/>
</dbReference>
<dbReference type="PIRSF" id="PIRSF000194">
    <property type="entry name" value="DHFR"/>
    <property type="match status" value="1"/>
</dbReference>
<dbReference type="PRINTS" id="PR00070">
    <property type="entry name" value="DHFR"/>
</dbReference>
<dbReference type="SUPFAM" id="SSF53597">
    <property type="entry name" value="Dihydrofolate reductase-like"/>
    <property type="match status" value="1"/>
</dbReference>
<dbReference type="PROSITE" id="PS00075">
    <property type="entry name" value="DHFR_1"/>
    <property type="match status" value="1"/>
</dbReference>
<dbReference type="PROSITE" id="PS51330">
    <property type="entry name" value="DHFR_2"/>
    <property type="match status" value="1"/>
</dbReference>
<reference key="1">
    <citation type="journal article" date="2002" name="Proc. Natl. Acad. Sci. U.S.A.">
        <title>Extensive mosaic structure revealed by the complete genome sequence of uropathogenic Escherichia coli.</title>
        <authorList>
            <person name="Welch R.A."/>
            <person name="Burland V."/>
            <person name="Plunkett G. III"/>
            <person name="Redford P."/>
            <person name="Roesch P."/>
            <person name="Rasko D."/>
            <person name="Buckles E.L."/>
            <person name="Liou S.-R."/>
            <person name="Boutin A."/>
            <person name="Hackett J."/>
            <person name="Stroud D."/>
            <person name="Mayhew G.F."/>
            <person name="Rose D.J."/>
            <person name="Zhou S."/>
            <person name="Schwartz D.C."/>
            <person name="Perna N.T."/>
            <person name="Mobley H.L.T."/>
            <person name="Donnenberg M.S."/>
            <person name="Blattner F.R."/>
        </authorList>
    </citation>
    <scope>NUCLEOTIDE SEQUENCE [LARGE SCALE GENOMIC DNA]</scope>
    <source>
        <strain>CFT073 / ATCC 700928 / UPEC</strain>
    </source>
</reference>
<keyword id="KW-0521">NADP</keyword>
<keyword id="KW-0554">One-carbon metabolism</keyword>
<keyword id="KW-0560">Oxidoreductase</keyword>
<keyword id="KW-1185">Reference proteome</keyword>
<sequence>MISLIAALAVDRVIGMENAMPWNLPADLAWFKRNTLNKPVIMGRHTWESIGRPLPGRKNIILSSQPGTDDRVTWVKSVDEAIAACGDVPEIMVIGGGRVYEQFLPKAQKLYLTHIDAEVEGDTHFPDYEPDDWESVFSEFHDADAQNSHSYCFEILERR</sequence>
<organism>
    <name type="scientific">Escherichia coli O6:H1 (strain CFT073 / ATCC 700928 / UPEC)</name>
    <dbReference type="NCBI Taxonomy" id="199310"/>
    <lineage>
        <taxon>Bacteria</taxon>
        <taxon>Pseudomonadati</taxon>
        <taxon>Pseudomonadota</taxon>
        <taxon>Gammaproteobacteria</taxon>
        <taxon>Enterobacterales</taxon>
        <taxon>Enterobacteriaceae</taxon>
        <taxon>Escherichia</taxon>
    </lineage>
</organism>
<gene>
    <name type="primary">folA</name>
    <name type="ordered locus">c0058</name>
</gene>
<proteinExistence type="inferred from homology"/>
<name>DYR_ECOL6</name>
<accession>P0ABQ5</accession>
<accession>P00379</accession>
<evidence type="ECO:0000250" key="1"/>
<evidence type="ECO:0000255" key="2">
    <source>
        <dbReference type="PROSITE-ProRule" id="PRU00660"/>
    </source>
</evidence>
<evidence type="ECO:0000305" key="3"/>
<comment type="function">
    <text evidence="1">Key enzyme in folate metabolism. Catalyzes an essential reaction for de novo glycine and purine synthesis, and for DNA precursor synthesis (By similarity).</text>
</comment>
<comment type="catalytic activity">
    <reaction evidence="2">
        <text>(6S)-5,6,7,8-tetrahydrofolate + NADP(+) = 7,8-dihydrofolate + NADPH + H(+)</text>
        <dbReference type="Rhea" id="RHEA:15009"/>
        <dbReference type="ChEBI" id="CHEBI:15378"/>
        <dbReference type="ChEBI" id="CHEBI:57451"/>
        <dbReference type="ChEBI" id="CHEBI:57453"/>
        <dbReference type="ChEBI" id="CHEBI:57783"/>
        <dbReference type="ChEBI" id="CHEBI:58349"/>
        <dbReference type="EC" id="1.5.1.3"/>
    </reaction>
</comment>
<comment type="pathway">
    <text>Cofactor biosynthesis; tetrahydrofolate biosynthesis; 5,6,7,8-tetrahydrofolate from 7,8-dihydrofolate: step 1/1.</text>
</comment>
<comment type="similarity">
    <text evidence="3">Belongs to the dihydrofolate reductase family.</text>
</comment>
<comment type="sequence caution" evidence="3">
    <conflict type="erroneous initiation">
        <sequence resource="EMBL-CDS" id="AAN78554"/>
    </conflict>
</comment>
<feature type="chain" id="PRO_0000186388" description="Dihydrofolate reductase">
    <location>
        <begin position="1"/>
        <end position="159"/>
    </location>
</feature>
<feature type="domain" description="DHFR" evidence="2">
    <location>
        <begin position="1"/>
        <end position="158"/>
    </location>
</feature>
<feature type="binding site" evidence="1">
    <location>
        <position position="5"/>
    </location>
    <ligand>
        <name>substrate</name>
    </ligand>
</feature>
<feature type="binding site" evidence="1">
    <location>
        <position position="7"/>
    </location>
    <ligand>
        <name>NADP(+)</name>
        <dbReference type="ChEBI" id="CHEBI:58349"/>
    </ligand>
</feature>
<feature type="binding site" evidence="1">
    <location>
        <begin position="13"/>
        <end position="19"/>
    </location>
    <ligand>
        <name>NADP(+)</name>
        <dbReference type="ChEBI" id="CHEBI:58349"/>
    </ligand>
</feature>
<feature type="binding site" evidence="1">
    <location>
        <position position="27"/>
    </location>
    <ligand>
        <name>substrate</name>
    </ligand>
</feature>
<feature type="binding site" evidence="1">
    <location>
        <begin position="45"/>
        <end position="46"/>
    </location>
    <ligand>
        <name>NADP(+)</name>
        <dbReference type="ChEBI" id="CHEBI:58349"/>
    </ligand>
</feature>
<feature type="binding site" evidence="1">
    <location>
        <position position="52"/>
    </location>
    <ligand>
        <name>substrate</name>
    </ligand>
</feature>
<feature type="binding site" evidence="1">
    <location>
        <position position="57"/>
    </location>
    <ligand>
        <name>substrate</name>
    </ligand>
</feature>
<feature type="binding site" evidence="1">
    <location>
        <begin position="63"/>
        <end position="64"/>
    </location>
    <ligand>
        <name>NADP(+)</name>
        <dbReference type="ChEBI" id="CHEBI:58349"/>
    </ligand>
</feature>
<feature type="binding site" evidence="1">
    <location>
        <position position="76"/>
    </location>
    <ligand>
        <name>NADP(+)</name>
        <dbReference type="ChEBI" id="CHEBI:58349"/>
    </ligand>
</feature>
<feature type="binding site" evidence="1">
    <location>
        <begin position="95"/>
        <end position="102"/>
    </location>
    <ligand>
        <name>NADP(+)</name>
        <dbReference type="ChEBI" id="CHEBI:58349"/>
    </ligand>
</feature>
<feature type="binding site" evidence="1">
    <location>
        <position position="113"/>
    </location>
    <ligand>
        <name>substrate</name>
    </ligand>
</feature>
<protein>
    <recommendedName>
        <fullName>Dihydrofolate reductase</fullName>
        <ecNumber>1.5.1.3</ecNumber>
    </recommendedName>
</protein>